<sequence length="209" mass="23338">MEYATMSSSNSTHNFQRKIALIGARNVGKTTLTVRFVESRFVESYYPTIENEFTRIIPYKSHDCTLEILDTAGQDEVSLLNIKSLTGVRGIILCYSIINRASFDLIPILWDKLVDQLGKDNLPVILVGTKADLGRSTKGVKRCVTKAEGEKLASTIGSQDKRNQAAFIECSAELDYNVEETFMLLLKQMERVEGTLGLDAENNNKCSIM</sequence>
<dbReference type="EC" id="3.6.5.-" evidence="1"/>
<dbReference type="EMBL" id="X59720">
    <property type="protein sequence ID" value="CAC42979.1"/>
    <property type="molecule type" value="Genomic_DNA"/>
</dbReference>
<dbReference type="EMBL" id="AY693092">
    <property type="protein sequence ID" value="AAT93111.1"/>
    <property type="molecule type" value="Genomic_DNA"/>
</dbReference>
<dbReference type="EMBL" id="X02445">
    <property type="protein sequence ID" value="CAA26291.1"/>
    <property type="molecule type" value="Genomic_DNA"/>
</dbReference>
<dbReference type="EMBL" id="BK006937">
    <property type="protein sequence ID" value="DAA07506.1"/>
    <property type="molecule type" value="Genomic_DNA"/>
</dbReference>
<dbReference type="PIR" id="S19438">
    <property type="entry name" value="S19438"/>
</dbReference>
<dbReference type="RefSeq" id="NP_009956.2">
    <property type="nucleotide sequence ID" value="NM_001178742.1"/>
</dbReference>
<dbReference type="SMR" id="P25378"/>
<dbReference type="BioGRID" id="31009">
    <property type="interactions" value="74"/>
</dbReference>
<dbReference type="DIP" id="DIP-1597N"/>
<dbReference type="FunCoup" id="P25378">
    <property type="interactions" value="220"/>
</dbReference>
<dbReference type="IntAct" id="P25378">
    <property type="interactions" value="4"/>
</dbReference>
<dbReference type="MINT" id="P25378"/>
<dbReference type="STRING" id="4932.YCR027C"/>
<dbReference type="iPTMnet" id="P25378"/>
<dbReference type="PaxDb" id="4932-YCR027C"/>
<dbReference type="PeptideAtlas" id="P25378"/>
<dbReference type="EnsemblFungi" id="YCR027C_mRNA">
    <property type="protein sequence ID" value="YCR027C"/>
    <property type="gene ID" value="YCR027C"/>
</dbReference>
<dbReference type="GeneID" id="850392"/>
<dbReference type="KEGG" id="sce:YCR027C"/>
<dbReference type="AGR" id="SGD:S000000622"/>
<dbReference type="SGD" id="S000000622">
    <property type="gene designation" value="RHB1"/>
</dbReference>
<dbReference type="VEuPathDB" id="FungiDB:YCR027C"/>
<dbReference type="eggNOG" id="KOG0395">
    <property type="taxonomic scope" value="Eukaryota"/>
</dbReference>
<dbReference type="GeneTree" id="ENSGT00940000165909"/>
<dbReference type="HOGENOM" id="CLU_041217_9_8_1"/>
<dbReference type="InParanoid" id="P25378"/>
<dbReference type="OMA" id="SARHNEN"/>
<dbReference type="OrthoDB" id="5976022at2759"/>
<dbReference type="BioCyc" id="YEAST:G3O-29342-MONOMER"/>
<dbReference type="Reactome" id="R-SCE-165159">
    <property type="pathway name" value="MTOR signalling"/>
</dbReference>
<dbReference type="Reactome" id="R-SCE-9639288">
    <property type="pathway name" value="Amino acids regulate mTORC1"/>
</dbReference>
<dbReference type="BioGRID-ORCS" id="850392">
    <property type="hits" value="0 hits in 10 CRISPR screens"/>
</dbReference>
<dbReference type="PRO" id="PR:P25378"/>
<dbReference type="Proteomes" id="UP000002311">
    <property type="component" value="Chromosome III"/>
</dbReference>
<dbReference type="RNAct" id="P25378">
    <property type="molecule type" value="protein"/>
</dbReference>
<dbReference type="GO" id="GO:0005829">
    <property type="term" value="C:cytosol"/>
    <property type="evidence" value="ECO:0007005"/>
    <property type="project" value="SGD"/>
</dbReference>
<dbReference type="GO" id="GO:0005886">
    <property type="term" value="C:plasma membrane"/>
    <property type="evidence" value="ECO:0000318"/>
    <property type="project" value="GO_Central"/>
</dbReference>
<dbReference type="GO" id="GO:0019003">
    <property type="term" value="F:GDP binding"/>
    <property type="evidence" value="ECO:0000318"/>
    <property type="project" value="GO_Central"/>
</dbReference>
<dbReference type="GO" id="GO:0005525">
    <property type="term" value="F:GTP binding"/>
    <property type="evidence" value="ECO:0000318"/>
    <property type="project" value="GO_Central"/>
</dbReference>
<dbReference type="GO" id="GO:0003924">
    <property type="term" value="F:GTPase activity"/>
    <property type="evidence" value="ECO:0000250"/>
    <property type="project" value="SGD"/>
</dbReference>
<dbReference type="GO" id="GO:0046872">
    <property type="term" value="F:metal ion binding"/>
    <property type="evidence" value="ECO:0007669"/>
    <property type="project" value="UniProtKB-KW"/>
</dbReference>
<dbReference type="GO" id="GO:0042147">
    <property type="term" value="P:retrograde transport, endosome to Golgi"/>
    <property type="evidence" value="ECO:0000315"/>
    <property type="project" value="SGD"/>
</dbReference>
<dbReference type="GO" id="GO:0007264">
    <property type="term" value="P:small GTPase-mediated signal transduction"/>
    <property type="evidence" value="ECO:0000318"/>
    <property type="project" value="GO_Central"/>
</dbReference>
<dbReference type="CDD" id="cd04137">
    <property type="entry name" value="RheB"/>
    <property type="match status" value="1"/>
</dbReference>
<dbReference type="FunFam" id="3.40.50.300:FF:002518">
    <property type="entry name" value="Rhb1p"/>
    <property type="match status" value="1"/>
</dbReference>
<dbReference type="Gene3D" id="3.40.50.300">
    <property type="entry name" value="P-loop containing nucleotide triphosphate hydrolases"/>
    <property type="match status" value="1"/>
</dbReference>
<dbReference type="InterPro" id="IPR027417">
    <property type="entry name" value="P-loop_NTPase"/>
</dbReference>
<dbReference type="InterPro" id="IPR005225">
    <property type="entry name" value="Small_GTP-bd"/>
</dbReference>
<dbReference type="InterPro" id="IPR001806">
    <property type="entry name" value="Small_GTPase"/>
</dbReference>
<dbReference type="InterPro" id="IPR020849">
    <property type="entry name" value="Small_GTPase_Ras-type"/>
</dbReference>
<dbReference type="NCBIfam" id="TIGR00231">
    <property type="entry name" value="small_GTP"/>
    <property type="match status" value="1"/>
</dbReference>
<dbReference type="PANTHER" id="PTHR24070">
    <property type="entry name" value="RAS, DI-RAS, AND RHEB FAMILY MEMBERS OF SMALL GTPASE SUPERFAMILY"/>
    <property type="match status" value="1"/>
</dbReference>
<dbReference type="Pfam" id="PF00071">
    <property type="entry name" value="Ras"/>
    <property type="match status" value="1"/>
</dbReference>
<dbReference type="PRINTS" id="PR00449">
    <property type="entry name" value="RASTRNSFRMNG"/>
</dbReference>
<dbReference type="SMART" id="SM00175">
    <property type="entry name" value="RAB"/>
    <property type="match status" value="1"/>
</dbReference>
<dbReference type="SMART" id="SM00173">
    <property type="entry name" value="RAS"/>
    <property type="match status" value="1"/>
</dbReference>
<dbReference type="SMART" id="SM00174">
    <property type="entry name" value="RHO"/>
    <property type="match status" value="1"/>
</dbReference>
<dbReference type="SUPFAM" id="SSF52540">
    <property type="entry name" value="P-loop containing nucleoside triphosphate hydrolases"/>
    <property type="match status" value="1"/>
</dbReference>
<dbReference type="PROSITE" id="PS51421">
    <property type="entry name" value="RAS"/>
    <property type="match status" value="1"/>
</dbReference>
<gene>
    <name type="primary">RHB1</name>
    <name type="synonym">RSG1</name>
    <name type="ordered locus">YCR027C</name>
    <name type="ORF">YCR27C</name>
</gene>
<reference key="1">
    <citation type="journal article" date="1992" name="Nature">
        <title>The complete DNA sequence of yeast chromosome III.</title>
        <authorList>
            <person name="Oliver S.G."/>
            <person name="van der Aart Q.J.M."/>
            <person name="Agostoni-Carbone M.L."/>
            <person name="Aigle M."/>
            <person name="Alberghina L."/>
            <person name="Alexandraki D."/>
            <person name="Antoine G."/>
            <person name="Anwar R."/>
            <person name="Ballesta J.P.G."/>
            <person name="Benit P."/>
            <person name="Berben G."/>
            <person name="Bergantino E."/>
            <person name="Biteau N."/>
            <person name="Bolle P.-A."/>
            <person name="Bolotin-Fukuhara M."/>
            <person name="Brown A."/>
            <person name="Brown A.J.P."/>
            <person name="Buhler J.-M."/>
            <person name="Carcano C."/>
            <person name="Carignani G."/>
            <person name="Cederberg H."/>
            <person name="Chanet R."/>
            <person name="Contreras R."/>
            <person name="Crouzet M."/>
            <person name="Daignan-Fornier B."/>
            <person name="Defoor E."/>
            <person name="Delgado M.D."/>
            <person name="Demolder J."/>
            <person name="Doira C."/>
            <person name="Dubois E."/>
            <person name="Dujon B."/>
            <person name="Duesterhoeft A."/>
            <person name="Erdmann D."/>
            <person name="Esteban M."/>
            <person name="Fabre F."/>
            <person name="Fairhead C."/>
            <person name="Faye G."/>
            <person name="Feldmann H."/>
            <person name="Fiers W."/>
            <person name="Francingues-Gaillard M.-C."/>
            <person name="Franco L."/>
            <person name="Frontali L."/>
            <person name="Fukuhara H."/>
            <person name="Fuller L.J."/>
            <person name="Galland P."/>
            <person name="Gent M.E."/>
            <person name="Gigot D."/>
            <person name="Gilliquet V."/>
            <person name="Glansdorff N."/>
            <person name="Goffeau A."/>
            <person name="Grenson M."/>
            <person name="Grisanti P."/>
            <person name="Grivell L.A."/>
            <person name="de Haan M."/>
            <person name="Haasemann M."/>
            <person name="Hatat D."/>
            <person name="Hoenicka J."/>
            <person name="Hegemann J.H."/>
            <person name="Herbert C.J."/>
            <person name="Hilger F."/>
            <person name="Hohmann S."/>
            <person name="Hollenberg C.P."/>
            <person name="Huse K."/>
            <person name="Iborra F."/>
            <person name="Indge K.J."/>
            <person name="Isono K."/>
            <person name="Jacq C."/>
            <person name="Jacquet M."/>
            <person name="James C.M."/>
            <person name="Jauniaux J.-C."/>
            <person name="Jia Y."/>
            <person name="Jimenez A."/>
            <person name="Kelly A."/>
            <person name="Kleinhans U."/>
            <person name="Kreisl P."/>
            <person name="Lanfranchi G."/>
            <person name="Lewis C."/>
            <person name="van der Linden C.G."/>
            <person name="Lucchini G."/>
            <person name="Lutzenkirchen K."/>
            <person name="Maat M.J."/>
            <person name="Mallet L."/>
            <person name="Mannhaupt G."/>
            <person name="Martegani E."/>
            <person name="Mathieu A."/>
            <person name="Maurer C.T.C."/>
            <person name="McConnell D."/>
            <person name="McKee R.A."/>
            <person name="Messenguy F."/>
            <person name="Mewes H.-W."/>
            <person name="Molemans F."/>
            <person name="Montague M.A."/>
            <person name="Muzi Falconi M."/>
            <person name="Navas L."/>
            <person name="Newlon C.S."/>
            <person name="Noone D."/>
            <person name="Pallier C."/>
            <person name="Panzeri L."/>
            <person name="Pearson B.M."/>
            <person name="Perea J."/>
            <person name="Philippsen P."/>
            <person name="Pierard A."/>
            <person name="Planta R.J."/>
            <person name="Plevani P."/>
            <person name="Poetsch B."/>
            <person name="Pohl F.M."/>
            <person name="Purnelle B."/>
            <person name="Ramezani Rad M."/>
            <person name="Rasmussen S.W."/>
            <person name="Raynal A."/>
            <person name="Remacha M.A."/>
            <person name="Richterich P."/>
            <person name="Roberts A.B."/>
            <person name="Rodriguez F."/>
            <person name="Sanz E."/>
            <person name="Schaaff-Gerstenschlaeger I."/>
            <person name="Scherens B."/>
            <person name="Schweitzer B."/>
            <person name="Shu Y."/>
            <person name="Skala J."/>
            <person name="Slonimski P.P."/>
            <person name="Sor F."/>
            <person name="Soustelle C."/>
            <person name="Spiegelberg R."/>
            <person name="Stateva L.I."/>
            <person name="Steensma H.Y."/>
            <person name="Steiner S."/>
            <person name="Thierry A."/>
            <person name="Thireos G."/>
            <person name="Tzermia M."/>
            <person name="Urrestarazu L.A."/>
            <person name="Valle G."/>
            <person name="Vetter I."/>
            <person name="van Vliet-Reedijk J.C."/>
            <person name="Voet M."/>
            <person name="Volckaert G."/>
            <person name="Vreken P."/>
            <person name="Wang H."/>
            <person name="Warmington J.R."/>
            <person name="von Wettstein D."/>
            <person name="Wicksteed B.L."/>
            <person name="Wilson C."/>
            <person name="Wurst H."/>
            <person name="Xu G."/>
            <person name="Yoshikawa A."/>
            <person name="Zimmermann F.K."/>
            <person name="Sgouros J.G."/>
        </authorList>
    </citation>
    <scope>NUCLEOTIDE SEQUENCE [LARGE SCALE GENOMIC DNA]</scope>
    <source>
        <strain>ATCC 204508 / S288c</strain>
    </source>
</reference>
<reference key="2">
    <citation type="submission" date="2001-06" db="EMBL/GenBank/DDBJ databases">
        <authorList>
            <person name="Valles G."/>
            <person name="Volckaerts G."/>
        </authorList>
    </citation>
    <scope>SEQUENCE REVISION TO 92</scope>
</reference>
<reference key="3">
    <citation type="journal article" date="2014" name="G3 (Bethesda)">
        <title>The reference genome sequence of Saccharomyces cerevisiae: Then and now.</title>
        <authorList>
            <person name="Engel S.R."/>
            <person name="Dietrich F.S."/>
            <person name="Fisk D.G."/>
            <person name="Binkley G."/>
            <person name="Balakrishnan R."/>
            <person name="Costanzo M.C."/>
            <person name="Dwight S.S."/>
            <person name="Hitz B.C."/>
            <person name="Karra K."/>
            <person name="Nash R.S."/>
            <person name="Weng S."/>
            <person name="Wong E.D."/>
            <person name="Lloyd P."/>
            <person name="Skrzypek M.S."/>
            <person name="Miyasato S.R."/>
            <person name="Simison M."/>
            <person name="Cherry J.M."/>
        </authorList>
    </citation>
    <scope>GENOME REANNOTATION</scope>
    <source>
        <strain>ATCC 204508 / S288c</strain>
    </source>
</reference>
<reference key="4">
    <citation type="journal article" date="2007" name="Genome Res.">
        <title>Approaching a complete repository of sequence-verified protein-encoding clones for Saccharomyces cerevisiae.</title>
        <authorList>
            <person name="Hu Y."/>
            <person name="Rolfs A."/>
            <person name="Bhullar B."/>
            <person name="Murthy T.V.S."/>
            <person name="Zhu C."/>
            <person name="Berger M.F."/>
            <person name="Camargo A.A."/>
            <person name="Kelley F."/>
            <person name="McCarron S."/>
            <person name="Jepson D."/>
            <person name="Richardson A."/>
            <person name="Raphael J."/>
            <person name="Moreira D."/>
            <person name="Taycher E."/>
            <person name="Zuo D."/>
            <person name="Mohr S."/>
            <person name="Kane M.F."/>
            <person name="Williamson J."/>
            <person name="Simpson A.J.G."/>
            <person name="Bulyk M.L."/>
            <person name="Harlow E."/>
            <person name="Marsischky G."/>
            <person name="Kolodner R.D."/>
            <person name="LaBaer J."/>
        </authorList>
    </citation>
    <scope>NUCLEOTIDE SEQUENCE [GENOMIC DNA]</scope>
    <source>
        <strain>ATCC 204508 / S288c</strain>
    </source>
</reference>
<reference key="5">
    <citation type="journal article" date="1985" name="J. Mol. Biol.">
        <title>Partial suppression of an ochre mutation in Saccharomyces cerevisiae by multicopy plasmids containing a normal yeast tRNAGln gene.</title>
        <authorList>
            <person name="Pure G.A."/>
            <person name="Robinson G.W."/>
            <person name="Naumovski L."/>
            <person name="Friedberg E.C."/>
        </authorList>
    </citation>
    <scope>NUCLEOTIDE SEQUENCE [GENOMIC DNA] OF 1-69</scope>
</reference>
<reference key="6">
    <citation type="journal article" date="2000" name="J. Biol. Chem.">
        <title>The Saccharomyces cerevisiae Rheb G-protein is involved in regulating canavanine resistance and arginine uptake.</title>
        <authorList>
            <person name="Urano J."/>
            <person name="Tabancay A.P."/>
            <person name="Yang W."/>
            <person name="Tamanoi F."/>
        </authorList>
    </citation>
    <scope>CHARACTERIZATION</scope>
    <scope>ISOPRENYLATION AT CYS-206</scope>
    <scope>MUTAGENESIS</scope>
</reference>
<reference key="7">
    <citation type="journal article" date="2002" name="Eukaryot. Cell">
        <title>Interaction with Btn2p is required for localization of Rsglp: Btn2p-mediated changes in arginine uptake in Saccharomyces cerevisiae.</title>
        <authorList>
            <person name="Chattopadhyay S."/>
            <person name="Pearce D.A."/>
        </authorList>
    </citation>
    <scope>INTERACTION WITH BTN2</scope>
    <scope>SUBCELLULAR LOCATION</scope>
</reference>
<reference key="8">
    <citation type="journal article" date="2003" name="Nature">
        <title>Global analysis of protein expression in yeast.</title>
        <authorList>
            <person name="Ghaemmaghami S."/>
            <person name="Huh W.-K."/>
            <person name="Bower K."/>
            <person name="Howson R.W."/>
            <person name="Belle A."/>
            <person name="Dephoure N."/>
            <person name="O'Shea E.K."/>
            <person name="Weissman J.S."/>
        </authorList>
    </citation>
    <scope>LEVEL OF PROTEIN EXPRESSION [LARGE SCALE ANALYSIS]</scope>
</reference>
<reference key="9">
    <citation type="journal article" date="2012" name="Proc. Natl. Acad. Sci. U.S.A.">
        <title>N-terminal acetylome analyses and functional insights of the N-terminal acetyltransferase NatB.</title>
        <authorList>
            <person name="Van Damme P."/>
            <person name="Lasa M."/>
            <person name="Polevoda B."/>
            <person name="Gazquez C."/>
            <person name="Elosegui-Artola A."/>
            <person name="Kim D.S."/>
            <person name="De Juan-Pardo E."/>
            <person name="Demeyer K."/>
            <person name="Hole K."/>
            <person name="Larrea E."/>
            <person name="Timmerman E."/>
            <person name="Prieto J."/>
            <person name="Arnesen T."/>
            <person name="Sherman F."/>
            <person name="Gevaert K."/>
            <person name="Aldabe R."/>
        </authorList>
    </citation>
    <scope>ACETYLATION [LARGE SCALE ANALYSIS] AT MET-1</scope>
    <scope>IDENTIFICATION BY MASS SPECTROMETRY [LARGE SCALE ANALYSIS]</scope>
</reference>
<accession>P25378</accession>
<accession>D6VR37</accession>
<accession>Q8NKJ6</accession>
<proteinExistence type="evidence at protein level"/>
<protein>
    <recommendedName>
        <fullName>GTP-binding protein RHB1</fullName>
        <ecNumber evidence="1">3.6.5.-</ecNumber>
    </recommendedName>
    <alternativeName>
        <fullName>GTP-binding protein RSG1</fullName>
    </alternativeName>
</protein>
<organism>
    <name type="scientific">Saccharomyces cerevisiae (strain ATCC 204508 / S288c)</name>
    <name type="common">Baker's yeast</name>
    <dbReference type="NCBI Taxonomy" id="559292"/>
    <lineage>
        <taxon>Eukaryota</taxon>
        <taxon>Fungi</taxon>
        <taxon>Dikarya</taxon>
        <taxon>Ascomycota</taxon>
        <taxon>Saccharomycotina</taxon>
        <taxon>Saccharomycetes</taxon>
        <taxon>Saccharomycetales</taxon>
        <taxon>Saccharomycetaceae</taxon>
        <taxon>Saccharomyces</taxon>
    </lineage>
</organism>
<comment type="function">
    <text evidence="1 3">Binds GTP and exhibits intrinsic GTPase activity (By similarity). Involved in the regulation of arginine and lysine uptake (PubMed:12456008). Acts through the CAN1 permease (PubMed:12456008).</text>
</comment>
<comment type="catalytic activity">
    <reaction evidence="1">
        <text>GTP + H2O = GDP + phosphate + H(+)</text>
        <dbReference type="Rhea" id="RHEA:19669"/>
        <dbReference type="ChEBI" id="CHEBI:15377"/>
        <dbReference type="ChEBI" id="CHEBI:15378"/>
        <dbReference type="ChEBI" id="CHEBI:37565"/>
        <dbReference type="ChEBI" id="CHEBI:43474"/>
        <dbReference type="ChEBI" id="CHEBI:58189"/>
    </reaction>
    <physiologicalReaction direction="left-to-right" evidence="1">
        <dbReference type="Rhea" id="RHEA:19670"/>
    </physiologicalReaction>
</comment>
<comment type="subunit">
    <text evidence="3">Interacts with BTN2.</text>
</comment>
<comment type="interaction">
    <interactant intactId="EBI-15113">
        <id>P25378</id>
    </interactant>
    <interactant intactId="EBI-3796">
        <id>P53286</id>
        <label>BTN2</label>
    </interactant>
    <organismsDiffer>false</organismsDiffer>
    <experiments>2</experiments>
</comment>
<comment type="subcellular location">
    <subcellularLocation>
        <location evidence="3">Cell membrane</location>
        <topology evidence="3">Peripheral membrane protein</topology>
    </subcellularLocation>
    <text>Cell periphery, adjacent to the plasma membrane.</text>
</comment>
<comment type="miscellaneous">
    <text evidence="4">Present with 1600 molecules/cell in log phase SD medium.</text>
</comment>
<comment type="similarity">
    <text evidence="5">Belongs to the small GTPase superfamily. Rheb family.</text>
</comment>
<feature type="chain" id="PRO_0000082713" description="GTP-binding protein RHB1">
    <location>
        <begin position="1"/>
        <end position="206"/>
    </location>
</feature>
<feature type="propeptide" id="PRO_0000281370" description="Removed in mature form">
    <location>
        <begin position="207"/>
        <end position="209"/>
    </location>
</feature>
<feature type="short sequence motif" description="Effector region">
    <location>
        <begin position="45"/>
        <end position="53"/>
    </location>
</feature>
<feature type="binding site" evidence="1">
    <location>
        <position position="28"/>
    </location>
    <ligand>
        <name>GTP</name>
        <dbReference type="ChEBI" id="CHEBI:37565"/>
    </ligand>
</feature>
<feature type="binding site" evidence="1">
    <location>
        <position position="29"/>
    </location>
    <ligand>
        <name>GTP</name>
        <dbReference type="ChEBI" id="CHEBI:37565"/>
    </ligand>
</feature>
<feature type="binding site" evidence="1">
    <location>
        <position position="30"/>
    </location>
    <ligand>
        <name>GTP</name>
        <dbReference type="ChEBI" id="CHEBI:37565"/>
    </ligand>
</feature>
<feature type="binding site" evidence="1">
    <location>
        <position position="30"/>
    </location>
    <ligand>
        <name>Mg(2+)</name>
        <dbReference type="ChEBI" id="CHEBI:18420"/>
    </ligand>
</feature>
<feature type="binding site" evidence="1">
    <location>
        <position position="31"/>
    </location>
    <ligand>
        <name>GTP</name>
        <dbReference type="ChEBI" id="CHEBI:37565"/>
    </ligand>
</feature>
<feature type="binding site" evidence="1">
    <location>
        <position position="42"/>
    </location>
    <ligand>
        <name>GTP</name>
        <dbReference type="ChEBI" id="CHEBI:37565"/>
    </ligand>
</feature>
<feature type="binding site" evidence="1">
    <location>
        <position position="45"/>
    </location>
    <ligand>
        <name>GTP</name>
        <dbReference type="ChEBI" id="CHEBI:37565"/>
    </ligand>
</feature>
<feature type="binding site" evidence="1">
    <location>
        <position position="48"/>
    </location>
    <ligand>
        <name>GTP</name>
        <dbReference type="ChEBI" id="CHEBI:37565"/>
    </ligand>
</feature>
<feature type="binding site" evidence="1">
    <location>
        <position position="48"/>
    </location>
    <ligand>
        <name>Mg(2+)</name>
        <dbReference type="ChEBI" id="CHEBI:18420"/>
    </ligand>
</feature>
<feature type="binding site" evidence="1">
    <location>
        <position position="132"/>
    </location>
    <ligand>
        <name>GTP</name>
        <dbReference type="ChEBI" id="CHEBI:37565"/>
    </ligand>
</feature>
<feature type="binding site" evidence="1">
    <location>
        <position position="172"/>
    </location>
    <ligand>
        <name>GTP</name>
        <dbReference type="ChEBI" id="CHEBI:37565"/>
    </ligand>
</feature>
<feature type="modified residue" description="N-acetylmethionine" evidence="6">
    <location>
        <position position="1"/>
    </location>
</feature>
<feature type="modified residue" description="Cysteine methyl ester" evidence="5">
    <location>
        <position position="206"/>
    </location>
</feature>
<feature type="lipid moiety-binding region" description="S-farnesyl cysteine" evidence="2">
    <location>
        <position position="206"/>
    </location>
</feature>
<keyword id="KW-0007">Acetylation</keyword>
<keyword id="KW-1003">Cell membrane</keyword>
<keyword id="KW-0342">GTP-binding</keyword>
<keyword id="KW-0378">Hydrolase</keyword>
<keyword id="KW-0449">Lipoprotein</keyword>
<keyword id="KW-0460">Magnesium</keyword>
<keyword id="KW-0472">Membrane</keyword>
<keyword id="KW-0479">Metal-binding</keyword>
<keyword id="KW-0488">Methylation</keyword>
<keyword id="KW-0547">Nucleotide-binding</keyword>
<keyword id="KW-0636">Prenylation</keyword>
<keyword id="KW-1185">Reference proteome</keyword>
<name>RHEB_YEAST</name>
<evidence type="ECO:0000250" key="1">
    <source>
        <dbReference type="UniProtKB" id="Q15382"/>
    </source>
</evidence>
<evidence type="ECO:0000269" key="2">
    <source>
    </source>
</evidence>
<evidence type="ECO:0000269" key="3">
    <source>
    </source>
</evidence>
<evidence type="ECO:0000269" key="4">
    <source>
    </source>
</evidence>
<evidence type="ECO:0000305" key="5"/>
<evidence type="ECO:0007744" key="6">
    <source>
    </source>
</evidence>